<name>C555_BRADU</name>
<keyword id="KW-0249">Electron transport</keyword>
<keyword id="KW-0349">Heme</keyword>
<keyword id="KW-0408">Iron</keyword>
<keyword id="KW-0479">Metal-binding</keyword>
<keyword id="KW-0574">Periplasm</keyword>
<keyword id="KW-1185">Reference proteome</keyword>
<keyword id="KW-0732">Signal</keyword>
<keyword id="KW-0813">Transport</keyword>
<comment type="function">
    <text>Low-spin monoheme cytochrome.</text>
</comment>
<comment type="biophysicochemical properties">
    <redoxPotential>
        <text>E(0) is +236 mV.</text>
    </redoxPotential>
</comment>
<comment type="subunit">
    <text>Monomer.</text>
</comment>
<comment type="subcellular location">
    <subcellularLocation>
        <location>Periplasm</location>
    </subcellularLocation>
</comment>
<comment type="PTM">
    <text evidence="1">Binds 1 heme c group covalently per subunit.</text>
</comment>
<gene>
    <name type="primary">cycC</name>
    <name type="ordered locus">bll5913</name>
</gene>
<proteinExistence type="evidence at protein level"/>
<organism>
    <name type="scientific">Bradyrhizobium diazoefficiens (strain JCM 10833 / BCRC 13528 / IAM 13628 / NBRC 14792 / USDA 110)</name>
    <dbReference type="NCBI Taxonomy" id="224911"/>
    <lineage>
        <taxon>Bacteria</taxon>
        <taxon>Pseudomonadati</taxon>
        <taxon>Pseudomonadota</taxon>
        <taxon>Alphaproteobacteria</taxon>
        <taxon>Hyphomicrobiales</taxon>
        <taxon>Nitrobacteraceae</taxon>
        <taxon>Bradyrhizobium</taxon>
    </lineage>
</organism>
<evidence type="ECO:0000250" key="1">
    <source>
        <dbReference type="UniProtKB" id="P00150"/>
    </source>
</evidence>
<evidence type="ECO:0000255" key="2"/>
<evidence type="ECO:0000305" key="3"/>
<feature type="signal peptide" evidence="2">
    <location>
        <begin position="1"/>
        <end position="20"/>
    </location>
</feature>
<feature type="chain" id="PRO_0000006544" description="Cytochrome c-555">
    <location>
        <begin position="21"/>
        <end position="149"/>
    </location>
</feature>
<feature type="binding site" description="axial binding residue" evidence="1">
    <location>
        <position position="32"/>
    </location>
    <ligand>
        <name>heme c</name>
        <dbReference type="ChEBI" id="CHEBI:61717"/>
    </ligand>
    <ligandPart>
        <name>Fe</name>
        <dbReference type="ChEBI" id="CHEBI:18248"/>
    </ligandPart>
</feature>
<feature type="binding site" description="covalent" evidence="1">
    <location>
        <position position="137"/>
    </location>
    <ligand>
        <name>heme c</name>
        <dbReference type="ChEBI" id="CHEBI:61717"/>
    </ligand>
</feature>
<feature type="binding site" description="covalent" evidence="1">
    <location>
        <position position="140"/>
    </location>
    <ligand>
        <name>heme c</name>
        <dbReference type="ChEBI" id="CHEBI:61717"/>
    </ligand>
</feature>
<feature type="binding site" description="axial binding residue" evidence="1">
    <location>
        <position position="141"/>
    </location>
    <ligand>
        <name>heme c</name>
        <dbReference type="ChEBI" id="CHEBI:61717"/>
    </ligand>
    <ligandPart>
        <name>Fe</name>
        <dbReference type="ChEBI" id="CHEBI:18248"/>
    </ligandPart>
</feature>
<feature type="sequence conflict" description="In Ref. 1; AAA26191." evidence="3" ref="1">
    <original>KA</original>
    <variation>NG</variation>
    <location>
        <begin position="99"/>
        <end position="100"/>
    </location>
</feature>
<reference key="1">
    <citation type="journal article" date="1991" name="J. Bacteriol.">
        <title>Characterization of cytochromes c550 and c555 from Bradyrhizobium japonicum: cloning, mutagenesis, and sequencing of the c555 gene (cycC).</title>
        <authorList>
            <person name="Tully R.E."/>
            <person name="Sadowsky M.J."/>
            <person name="Keister D.L."/>
        </authorList>
    </citation>
    <scope>NUCLEOTIDE SEQUENCE [GENOMIC DNA]</scope>
    <source>
        <strain>JCM 10833 / BCRC 13528 / IAM 13628 / NBRC 14792 / USDA 110</strain>
    </source>
</reference>
<reference key="2">
    <citation type="journal article" date="2002" name="DNA Res.">
        <title>Complete genomic sequence of nitrogen-fixing symbiotic bacterium Bradyrhizobium japonicum USDA110.</title>
        <authorList>
            <person name="Kaneko T."/>
            <person name="Nakamura Y."/>
            <person name="Sato S."/>
            <person name="Minamisawa K."/>
            <person name="Uchiumi T."/>
            <person name="Sasamoto S."/>
            <person name="Watanabe A."/>
            <person name="Idesawa K."/>
            <person name="Iriguchi M."/>
            <person name="Kawashima K."/>
            <person name="Kohara M."/>
            <person name="Matsumoto M."/>
            <person name="Shimpo S."/>
            <person name="Tsuruoka H."/>
            <person name="Wada T."/>
            <person name="Yamada M."/>
            <person name="Tabata S."/>
        </authorList>
    </citation>
    <scope>NUCLEOTIDE SEQUENCE [LARGE SCALE GENOMIC DNA]</scope>
    <source>
        <strain>JCM 10833 / BCRC 13528 / IAM 13628 / NBRC 14792 / USDA 110</strain>
    </source>
</reference>
<accession>Q45234</accession>
<protein>
    <recommendedName>
        <fullName>Cytochrome c-555</fullName>
    </recommendedName>
    <alternativeName>
        <fullName>Cytochrome c555</fullName>
    </alternativeName>
</protein>
<dbReference type="EMBL" id="M77796">
    <property type="protein sequence ID" value="AAA26191.1"/>
    <property type="molecule type" value="Genomic_DNA"/>
</dbReference>
<dbReference type="EMBL" id="BA000040">
    <property type="protein sequence ID" value="BAC51178.1"/>
    <property type="molecule type" value="Genomic_DNA"/>
</dbReference>
<dbReference type="RefSeq" id="NP_772553.1">
    <property type="nucleotide sequence ID" value="NC_004463.1"/>
</dbReference>
<dbReference type="RefSeq" id="WP_011088654.1">
    <property type="nucleotide sequence ID" value="NC_004463.1"/>
</dbReference>
<dbReference type="SMR" id="Q45234"/>
<dbReference type="STRING" id="224911.AAV28_27100"/>
<dbReference type="EnsemblBacteria" id="BAC51178">
    <property type="protein sequence ID" value="BAC51178"/>
    <property type="gene ID" value="BAC51178"/>
</dbReference>
<dbReference type="GeneID" id="46492909"/>
<dbReference type="KEGG" id="bja:bll5913"/>
<dbReference type="PATRIC" id="fig|224911.44.peg.5860"/>
<dbReference type="eggNOG" id="COG3909">
    <property type="taxonomic scope" value="Bacteria"/>
</dbReference>
<dbReference type="HOGENOM" id="CLU_106713_2_0_5"/>
<dbReference type="InParanoid" id="Q45234"/>
<dbReference type="OrthoDB" id="9811729at2"/>
<dbReference type="PhylomeDB" id="Q45234"/>
<dbReference type="Proteomes" id="UP000002526">
    <property type="component" value="Chromosome"/>
</dbReference>
<dbReference type="GO" id="GO:0042597">
    <property type="term" value="C:periplasmic space"/>
    <property type="evidence" value="ECO:0007669"/>
    <property type="project" value="UniProtKB-SubCell"/>
</dbReference>
<dbReference type="GO" id="GO:0009055">
    <property type="term" value="F:electron transfer activity"/>
    <property type="evidence" value="ECO:0007669"/>
    <property type="project" value="InterPro"/>
</dbReference>
<dbReference type="GO" id="GO:0020037">
    <property type="term" value="F:heme binding"/>
    <property type="evidence" value="ECO:0007669"/>
    <property type="project" value="InterPro"/>
</dbReference>
<dbReference type="GO" id="GO:0005506">
    <property type="term" value="F:iron ion binding"/>
    <property type="evidence" value="ECO:0007669"/>
    <property type="project" value="InterPro"/>
</dbReference>
<dbReference type="GO" id="GO:0022900">
    <property type="term" value="P:electron transport chain"/>
    <property type="evidence" value="ECO:0007669"/>
    <property type="project" value="InterPro"/>
</dbReference>
<dbReference type="Gene3D" id="1.20.120.10">
    <property type="entry name" value="Cytochrome c/b562"/>
    <property type="match status" value="1"/>
</dbReference>
<dbReference type="InterPro" id="IPR010980">
    <property type="entry name" value="Cyt_c/b562"/>
</dbReference>
<dbReference type="InterPro" id="IPR002321">
    <property type="entry name" value="Cyt_c_II"/>
</dbReference>
<dbReference type="InterPro" id="IPR012127">
    <property type="entry name" value="Cyt_c_prime"/>
</dbReference>
<dbReference type="Pfam" id="PF01322">
    <property type="entry name" value="Cytochrom_C_2"/>
    <property type="match status" value="1"/>
</dbReference>
<dbReference type="PIRSF" id="PIRSF000027">
    <property type="entry name" value="Cytc_c_prime"/>
    <property type="match status" value="1"/>
</dbReference>
<dbReference type="SUPFAM" id="SSF47175">
    <property type="entry name" value="Cytochromes"/>
    <property type="match status" value="1"/>
</dbReference>
<dbReference type="PROSITE" id="PS51009">
    <property type="entry name" value="CYTCII"/>
    <property type="match status" value="1"/>
</dbReference>
<sequence>MKRTMIVVTTLLLGAGAVMAQQEVAVQQDNLMRSQARSLYTVILKMTKGDIPYDQKAADEAIANLETDVAKIAKTFEVNPKQDVVNATYGASPKVWKNKADFDSKIPPVQKAIAQVKGKITDVASLKAAYTAINDRCTDCHETYRLKLK</sequence>